<organism>
    <name type="scientific">Sorangium cellulosum (strain So ce56)</name>
    <name type="common">Polyangium cellulosum (strain So ce56)</name>
    <dbReference type="NCBI Taxonomy" id="448385"/>
    <lineage>
        <taxon>Bacteria</taxon>
        <taxon>Pseudomonadati</taxon>
        <taxon>Myxococcota</taxon>
        <taxon>Polyangia</taxon>
        <taxon>Polyangiales</taxon>
        <taxon>Polyangiaceae</taxon>
        <taxon>Sorangium</taxon>
    </lineage>
</organism>
<accession>A9GVA4</accession>
<protein>
    <recommendedName>
        <fullName evidence="1">Glutamate--tRNA ligase</fullName>
        <ecNumber evidence="1">6.1.1.17</ecNumber>
    </recommendedName>
    <alternativeName>
        <fullName evidence="1">Glutamyl-tRNA synthetase</fullName>
        <shortName evidence="1">GluRS</shortName>
    </alternativeName>
</protein>
<name>SYE_SORC5</name>
<evidence type="ECO:0000255" key="1">
    <source>
        <dbReference type="HAMAP-Rule" id="MF_00022"/>
    </source>
</evidence>
<evidence type="ECO:0000305" key="2"/>
<sequence>MRLLFGDAAASARRPEEYEARYPRRALPKGAMVTRYAPSPTGFMHIGGIFVSLINKRLSLQSEGVFYLRLEDTDVKRAIPGALDTIVDSLARFDLSPQEGVLRAPAKDGDASSRGEFVQQGSYGPYIQTERVEIYRDYAIDLIRRGFAYPCFCTVEELDAIRQEQMALTVKPGVHGRWAKWRDAPLARVKEALAGGTPFVLRLRAPDDVSGRVEWKDGVKGVISMPVNDLDTILLKSDGIPTYHFAHAIDDHLMRTTHVIRGDEWISSMPLHLQLFRTLGFRPVEYAHVPPIQKLDRVEEVDPETGETKVSDARRKLSKRKDPEANIAYYREIGVPETGTIEYLLNIANSAFEDWRKANPDKPYSAFPLKLNKLAPGGALSDMVKLKSVSQAVVSRMSAEDVYAQGLDWAREHDKELAALMERDPEYTKRALGIERGGKKSNKRITTWPDLRPQLFFFYDELYDRVDALDFPENVPEGDRQPLLRQMLDTFDPADSKEAWFEKIRQIAVASGYAGEVKQYKASPESWKGHVGDVSMLLRVAVCGTRNSPDLTEVMAVLGEPRVRARIARFL</sequence>
<gene>
    <name evidence="1" type="primary">gltX</name>
    <name type="ordered locus">sce0573</name>
</gene>
<proteinExistence type="inferred from homology"/>
<dbReference type="EC" id="6.1.1.17" evidence="1"/>
<dbReference type="EMBL" id="AM746676">
    <property type="protein sequence ID" value="CAN90730.1"/>
    <property type="status" value="ALT_INIT"/>
    <property type="molecule type" value="Genomic_DNA"/>
</dbReference>
<dbReference type="RefSeq" id="WP_012233208.1">
    <property type="nucleotide sequence ID" value="NC_010162.1"/>
</dbReference>
<dbReference type="SMR" id="A9GVA4"/>
<dbReference type="STRING" id="448385.sce0573"/>
<dbReference type="KEGG" id="scl:sce0573"/>
<dbReference type="eggNOG" id="COG0008">
    <property type="taxonomic scope" value="Bacteria"/>
</dbReference>
<dbReference type="HOGENOM" id="CLU_015768_6_3_7"/>
<dbReference type="OrthoDB" id="9807503at2"/>
<dbReference type="Proteomes" id="UP000002139">
    <property type="component" value="Chromosome"/>
</dbReference>
<dbReference type="GO" id="GO:0005829">
    <property type="term" value="C:cytosol"/>
    <property type="evidence" value="ECO:0007669"/>
    <property type="project" value="TreeGrafter"/>
</dbReference>
<dbReference type="GO" id="GO:0005524">
    <property type="term" value="F:ATP binding"/>
    <property type="evidence" value="ECO:0007669"/>
    <property type="project" value="UniProtKB-UniRule"/>
</dbReference>
<dbReference type="GO" id="GO:0004818">
    <property type="term" value="F:glutamate-tRNA ligase activity"/>
    <property type="evidence" value="ECO:0007669"/>
    <property type="project" value="UniProtKB-UniRule"/>
</dbReference>
<dbReference type="GO" id="GO:0000049">
    <property type="term" value="F:tRNA binding"/>
    <property type="evidence" value="ECO:0007669"/>
    <property type="project" value="InterPro"/>
</dbReference>
<dbReference type="GO" id="GO:0006424">
    <property type="term" value="P:glutamyl-tRNA aminoacylation"/>
    <property type="evidence" value="ECO:0007669"/>
    <property type="project" value="UniProtKB-UniRule"/>
</dbReference>
<dbReference type="Gene3D" id="1.10.10.350">
    <property type="match status" value="1"/>
</dbReference>
<dbReference type="Gene3D" id="3.40.50.620">
    <property type="entry name" value="HUPs"/>
    <property type="match status" value="1"/>
</dbReference>
<dbReference type="HAMAP" id="MF_00022">
    <property type="entry name" value="Glu_tRNA_synth_type1"/>
    <property type="match status" value="1"/>
</dbReference>
<dbReference type="InterPro" id="IPR045462">
    <property type="entry name" value="aa-tRNA-synth_I_cd-bd"/>
</dbReference>
<dbReference type="InterPro" id="IPR020751">
    <property type="entry name" value="aa-tRNA-synth_I_codon-bd_sub2"/>
</dbReference>
<dbReference type="InterPro" id="IPR001412">
    <property type="entry name" value="aa-tRNA-synth_I_CS"/>
</dbReference>
<dbReference type="InterPro" id="IPR008925">
    <property type="entry name" value="aa_tRNA-synth_I_cd-bd_sf"/>
</dbReference>
<dbReference type="InterPro" id="IPR004527">
    <property type="entry name" value="Glu-tRNA-ligase_bac/mito"/>
</dbReference>
<dbReference type="InterPro" id="IPR000924">
    <property type="entry name" value="Glu/Gln-tRNA-synth"/>
</dbReference>
<dbReference type="InterPro" id="IPR020058">
    <property type="entry name" value="Glu/Gln-tRNA-synth_Ib_cat-dom"/>
</dbReference>
<dbReference type="InterPro" id="IPR049940">
    <property type="entry name" value="GluQ/Sye"/>
</dbReference>
<dbReference type="InterPro" id="IPR014729">
    <property type="entry name" value="Rossmann-like_a/b/a_fold"/>
</dbReference>
<dbReference type="PANTHER" id="PTHR43311">
    <property type="entry name" value="GLUTAMATE--TRNA LIGASE"/>
    <property type="match status" value="1"/>
</dbReference>
<dbReference type="PANTHER" id="PTHR43311:SF2">
    <property type="entry name" value="GLUTAMATE--TRNA LIGASE, MITOCHONDRIAL-RELATED"/>
    <property type="match status" value="1"/>
</dbReference>
<dbReference type="Pfam" id="PF19269">
    <property type="entry name" value="Anticodon_2"/>
    <property type="match status" value="1"/>
</dbReference>
<dbReference type="Pfam" id="PF00749">
    <property type="entry name" value="tRNA-synt_1c"/>
    <property type="match status" value="1"/>
</dbReference>
<dbReference type="PRINTS" id="PR00987">
    <property type="entry name" value="TRNASYNTHGLU"/>
</dbReference>
<dbReference type="SUPFAM" id="SSF48163">
    <property type="entry name" value="An anticodon-binding domain of class I aminoacyl-tRNA synthetases"/>
    <property type="match status" value="1"/>
</dbReference>
<dbReference type="SUPFAM" id="SSF52374">
    <property type="entry name" value="Nucleotidylyl transferase"/>
    <property type="match status" value="1"/>
</dbReference>
<dbReference type="PROSITE" id="PS00178">
    <property type="entry name" value="AA_TRNA_LIGASE_I"/>
    <property type="match status" value="1"/>
</dbReference>
<comment type="function">
    <text evidence="1">Catalyzes the attachment of glutamate to tRNA(Glu) in a two-step reaction: glutamate is first activated by ATP to form Glu-AMP and then transferred to the acceptor end of tRNA(Glu).</text>
</comment>
<comment type="catalytic activity">
    <reaction evidence="1">
        <text>tRNA(Glu) + L-glutamate + ATP = L-glutamyl-tRNA(Glu) + AMP + diphosphate</text>
        <dbReference type="Rhea" id="RHEA:23540"/>
        <dbReference type="Rhea" id="RHEA-COMP:9663"/>
        <dbReference type="Rhea" id="RHEA-COMP:9680"/>
        <dbReference type="ChEBI" id="CHEBI:29985"/>
        <dbReference type="ChEBI" id="CHEBI:30616"/>
        <dbReference type="ChEBI" id="CHEBI:33019"/>
        <dbReference type="ChEBI" id="CHEBI:78442"/>
        <dbReference type="ChEBI" id="CHEBI:78520"/>
        <dbReference type="ChEBI" id="CHEBI:456215"/>
        <dbReference type="EC" id="6.1.1.17"/>
    </reaction>
</comment>
<comment type="subunit">
    <text evidence="1">Monomer.</text>
</comment>
<comment type="subcellular location">
    <subcellularLocation>
        <location evidence="1">Cytoplasm</location>
    </subcellularLocation>
</comment>
<comment type="similarity">
    <text evidence="1">Belongs to the class-I aminoacyl-tRNA synthetase family. Glutamate--tRNA ligase type 1 subfamily.</text>
</comment>
<comment type="sequence caution" evidence="2">
    <conflict type="erroneous initiation">
        <sequence resource="EMBL-CDS" id="CAN90730"/>
    </conflict>
</comment>
<keyword id="KW-0030">Aminoacyl-tRNA synthetase</keyword>
<keyword id="KW-0067">ATP-binding</keyword>
<keyword id="KW-0963">Cytoplasm</keyword>
<keyword id="KW-0436">Ligase</keyword>
<keyword id="KW-0547">Nucleotide-binding</keyword>
<keyword id="KW-0648">Protein biosynthesis</keyword>
<keyword id="KW-1185">Reference proteome</keyword>
<feature type="chain" id="PRO_0000367769" description="Glutamate--tRNA ligase">
    <location>
        <begin position="1"/>
        <end position="571"/>
    </location>
</feature>
<feature type="short sequence motif" description="'HIGH' region" evidence="1">
    <location>
        <begin position="38"/>
        <end position="48"/>
    </location>
</feature>
<feature type="short sequence motif" description="'KMSKS' region" evidence="1">
    <location>
        <begin position="316"/>
        <end position="320"/>
    </location>
</feature>
<feature type="binding site" evidence="1">
    <location>
        <position position="319"/>
    </location>
    <ligand>
        <name>ATP</name>
        <dbReference type="ChEBI" id="CHEBI:30616"/>
    </ligand>
</feature>
<reference key="1">
    <citation type="journal article" date="2007" name="Nat. Biotechnol.">
        <title>Complete genome sequence of the myxobacterium Sorangium cellulosum.</title>
        <authorList>
            <person name="Schneiker S."/>
            <person name="Perlova O."/>
            <person name="Kaiser O."/>
            <person name="Gerth K."/>
            <person name="Alici A."/>
            <person name="Altmeyer M.O."/>
            <person name="Bartels D."/>
            <person name="Bekel T."/>
            <person name="Beyer S."/>
            <person name="Bode E."/>
            <person name="Bode H.B."/>
            <person name="Bolten C.J."/>
            <person name="Choudhuri J.V."/>
            <person name="Doss S."/>
            <person name="Elnakady Y.A."/>
            <person name="Frank B."/>
            <person name="Gaigalat L."/>
            <person name="Goesmann A."/>
            <person name="Groeger C."/>
            <person name="Gross F."/>
            <person name="Jelsbak L."/>
            <person name="Jelsbak L."/>
            <person name="Kalinowski J."/>
            <person name="Kegler C."/>
            <person name="Knauber T."/>
            <person name="Konietzny S."/>
            <person name="Kopp M."/>
            <person name="Krause L."/>
            <person name="Krug D."/>
            <person name="Linke B."/>
            <person name="Mahmud T."/>
            <person name="Martinez-Arias R."/>
            <person name="McHardy A.C."/>
            <person name="Merai M."/>
            <person name="Meyer F."/>
            <person name="Mormann S."/>
            <person name="Munoz-Dorado J."/>
            <person name="Perez J."/>
            <person name="Pradella S."/>
            <person name="Rachid S."/>
            <person name="Raddatz G."/>
            <person name="Rosenau F."/>
            <person name="Rueckert C."/>
            <person name="Sasse F."/>
            <person name="Scharfe M."/>
            <person name="Schuster S.C."/>
            <person name="Suen G."/>
            <person name="Treuner-Lange A."/>
            <person name="Velicer G.J."/>
            <person name="Vorholter F.-J."/>
            <person name="Weissman K.J."/>
            <person name="Welch R.D."/>
            <person name="Wenzel S.C."/>
            <person name="Whitworth D.E."/>
            <person name="Wilhelm S."/>
            <person name="Wittmann C."/>
            <person name="Bloecker H."/>
            <person name="Puehler A."/>
            <person name="Mueller R."/>
        </authorList>
    </citation>
    <scope>NUCLEOTIDE SEQUENCE [LARGE SCALE GENOMIC DNA]</scope>
    <source>
        <strain>So ce56</strain>
    </source>
</reference>